<comment type="function">
    <text evidence="1">Catalyzes the transfer of a dimethylallyl group onto the adenine at position 37 in tRNAs that read codons beginning with uridine, leading to the formation of N6-(dimethylallyl)adenosine (i(6)A).</text>
</comment>
<comment type="catalytic activity">
    <reaction>
        <text>adenosine(37) in tRNA + dimethylallyl diphosphate = N(6)-dimethylallyladenosine(37) in tRNA + diphosphate</text>
        <dbReference type="Rhea" id="RHEA:26482"/>
        <dbReference type="Rhea" id="RHEA-COMP:10162"/>
        <dbReference type="Rhea" id="RHEA-COMP:10375"/>
        <dbReference type="ChEBI" id="CHEBI:33019"/>
        <dbReference type="ChEBI" id="CHEBI:57623"/>
        <dbReference type="ChEBI" id="CHEBI:74411"/>
        <dbReference type="ChEBI" id="CHEBI:74415"/>
        <dbReference type="EC" id="2.5.1.75"/>
    </reaction>
</comment>
<comment type="cofactor">
    <cofactor evidence="1">
        <name>Mg(2+)</name>
        <dbReference type="ChEBI" id="CHEBI:18420"/>
    </cofactor>
</comment>
<comment type="subunit">
    <text evidence="1">Monomer.</text>
</comment>
<comment type="similarity">
    <text evidence="2">Belongs to the IPP transferase family.</text>
</comment>
<organism>
    <name type="scientific">Helicobacter pylori (strain HPAG1)</name>
    <dbReference type="NCBI Taxonomy" id="357544"/>
    <lineage>
        <taxon>Bacteria</taxon>
        <taxon>Pseudomonadati</taxon>
        <taxon>Campylobacterota</taxon>
        <taxon>Epsilonproteobacteria</taxon>
        <taxon>Campylobacterales</taxon>
        <taxon>Helicobacteraceae</taxon>
        <taxon>Helicobacter</taxon>
    </lineage>
</organism>
<name>MIAA_HELPH</name>
<sequence length="276" mass="31355">MDAEIFSLDSLSIYKDINIASAKPSLKERKNIKHYALDHLNIDEKNNAQLFKTLLEDAMRVSSKEILLIVGGSSFYLKSILEGLSRMPKISGEEVVKIEREISTLADPYAFLKSIDPTIAFKIHPNDTYRIHKALEIFYATHTPPSEYFKANPKKPFEHAISLFALSIEKSTLHSNIKQRTKNMLHSGLVEEIKALYTQYPKDSQPFKAIGVKESILFLEKQLTLKELEEAIISNTMKLAKCQNTFNKTQFNNLYVGSVKEVRHAILNHSKSAIKG</sequence>
<keyword id="KW-0067">ATP-binding</keyword>
<keyword id="KW-0460">Magnesium</keyword>
<keyword id="KW-0547">Nucleotide-binding</keyword>
<keyword id="KW-0808">Transferase</keyword>
<keyword id="KW-0819">tRNA processing</keyword>
<accession>Q1CRL4</accession>
<gene>
    <name type="primary">miaA</name>
    <name type="ordered locus">HPAG1_1341</name>
</gene>
<reference key="1">
    <citation type="journal article" date="2006" name="Proc. Natl. Acad. Sci. U.S.A.">
        <title>The complete genome sequence of a chronic atrophic gastritis Helicobacter pylori strain: evolution during disease progression.</title>
        <authorList>
            <person name="Oh J.D."/>
            <person name="Kling-Baeckhed H."/>
            <person name="Giannakis M."/>
            <person name="Xu J."/>
            <person name="Fulton R.S."/>
            <person name="Fulton L.A."/>
            <person name="Cordum H.S."/>
            <person name="Wang C."/>
            <person name="Elliott G."/>
            <person name="Edwards J."/>
            <person name="Mardis E.R."/>
            <person name="Engstrand L.G."/>
            <person name="Gordon J.I."/>
        </authorList>
    </citation>
    <scope>NUCLEOTIDE SEQUENCE [LARGE SCALE GENOMIC DNA]</scope>
    <source>
        <strain>HPAG1</strain>
    </source>
</reference>
<evidence type="ECO:0000250" key="1"/>
<evidence type="ECO:0000305" key="2"/>
<protein>
    <recommendedName>
        <fullName>tRNA dimethylallyltransferase</fullName>
        <ecNumber>2.5.1.75</ecNumber>
    </recommendedName>
    <alternativeName>
        <fullName>Dimethylallyl diphosphate:tRNA dimethylallyltransferase</fullName>
        <shortName>DMAPP:tRNA dimethylallyltransferase</shortName>
        <shortName>DMATase</shortName>
    </alternativeName>
    <alternativeName>
        <fullName>Isopentenyl-diphosphate:tRNA isopentenyltransferase</fullName>
        <shortName>IPP transferase</shortName>
        <shortName>IPPT</shortName>
        <shortName>IPTase</shortName>
    </alternativeName>
</protein>
<feature type="chain" id="PRO_0000377186" description="tRNA dimethylallyltransferase">
    <location>
        <begin position="1"/>
        <end position="276"/>
    </location>
</feature>
<feature type="region of interest" description="Interaction with substrate tRNA" evidence="1">
    <location>
        <begin position="9"/>
        <end position="12"/>
    </location>
</feature>
<feature type="site" description="Interaction with substrate tRNA" evidence="1">
    <location>
        <position position="73"/>
    </location>
</feature>
<dbReference type="EC" id="2.5.1.75"/>
<dbReference type="EMBL" id="CP000241">
    <property type="protein sequence ID" value="ABF85408.1"/>
    <property type="molecule type" value="Genomic_DNA"/>
</dbReference>
<dbReference type="SMR" id="Q1CRL4"/>
<dbReference type="KEGG" id="hpa:HPAG1_1341"/>
<dbReference type="HOGENOM" id="CLU_032616_0_1_7"/>
<dbReference type="GO" id="GO:0005524">
    <property type="term" value="F:ATP binding"/>
    <property type="evidence" value="ECO:0007669"/>
    <property type="project" value="UniProtKB-KW"/>
</dbReference>
<dbReference type="GO" id="GO:0052381">
    <property type="term" value="F:tRNA dimethylallyltransferase activity"/>
    <property type="evidence" value="ECO:0007669"/>
    <property type="project" value="UniProtKB-EC"/>
</dbReference>
<dbReference type="GO" id="GO:0006400">
    <property type="term" value="P:tRNA modification"/>
    <property type="evidence" value="ECO:0007669"/>
    <property type="project" value="TreeGrafter"/>
</dbReference>
<dbReference type="Gene3D" id="1.10.20.140">
    <property type="match status" value="1"/>
</dbReference>
<dbReference type="Gene3D" id="3.40.50.300">
    <property type="entry name" value="P-loop containing nucleotide triphosphate hydrolases"/>
    <property type="match status" value="1"/>
</dbReference>
<dbReference type="InterPro" id="IPR039657">
    <property type="entry name" value="Dimethylallyltransferase"/>
</dbReference>
<dbReference type="InterPro" id="IPR018022">
    <property type="entry name" value="IPT"/>
</dbReference>
<dbReference type="InterPro" id="IPR027417">
    <property type="entry name" value="P-loop_NTPase"/>
</dbReference>
<dbReference type="NCBIfam" id="TIGR00174">
    <property type="entry name" value="miaA"/>
    <property type="match status" value="1"/>
</dbReference>
<dbReference type="PANTHER" id="PTHR11088">
    <property type="entry name" value="TRNA DIMETHYLALLYLTRANSFERASE"/>
    <property type="match status" value="1"/>
</dbReference>
<dbReference type="PANTHER" id="PTHR11088:SF60">
    <property type="entry name" value="TRNA DIMETHYLALLYLTRANSFERASE"/>
    <property type="match status" value="1"/>
</dbReference>
<dbReference type="Pfam" id="PF01715">
    <property type="entry name" value="IPPT"/>
    <property type="match status" value="1"/>
</dbReference>
<proteinExistence type="inferred from homology"/>